<accession>Q8KC68</accession>
<name>BSHC_CHLTE</name>
<proteinExistence type="inferred from homology"/>
<protein>
    <recommendedName>
        <fullName evidence="1">Putative cysteine ligase BshC</fullName>
        <ecNumber evidence="1">6.-.-.-</ecNumber>
    </recommendedName>
</protein>
<feature type="chain" id="PRO_0000378230" description="Putative cysteine ligase BshC">
    <location>
        <begin position="1"/>
        <end position="563"/>
    </location>
</feature>
<feature type="coiled-coil region" evidence="1">
    <location>
        <begin position="493"/>
        <end position="518"/>
    </location>
</feature>
<sequence length="563" mass="63912">MNTFLIDYQRIRTPKKGFSKLFCDYSSESEARTKLLADCFHLDYRKDGDYYRHLGFLASRNFRREALVELLTEQNERFDGSERQQREIEKLRSPRCMAIVTGQQTGLFTGPLYTIYKALTAVVLARKQKELFPEYDFVPVFWIESEDHDFDEASSTVLFSGGGLEQITAEAAHRLPDQMAGATQLGASIGATVQEFLDLLPDTEFKPEIAEILESCYEPGVTFEIAFARTMNRLFREHPLILLSAQDTRFKQLAVEVLCREVETAPASSYDVVAQSSILESMGYPAQTKPRAVNLFYLNQLGQRLKIEQPSPDNFLIVPDRQRYTRHQLLEICQDHPEKFSPNVILRPIVQDAVLPTFAYIGGPGEISYLAQFRKAYEHFGLSMPFVIPRGSFTLVEPKIARTMDKVLKATGRPSFSRRQVYEAVFEDVQELRKSMVSGGDSQKLDALFEQVESEVTRSLSTLEPALVKMDPTLQAALSASSGQITKIIGTIKEKTYRAGRRKHDELLQQLDKAELNLFPDGKPQERSINIFHYLNKYGPSLIGELAKVLQGYSTEAHLIVEL</sequence>
<organism>
    <name type="scientific">Chlorobaculum tepidum (strain ATCC 49652 / DSM 12025 / NBRC 103806 / TLS)</name>
    <name type="common">Chlorobium tepidum</name>
    <dbReference type="NCBI Taxonomy" id="194439"/>
    <lineage>
        <taxon>Bacteria</taxon>
        <taxon>Pseudomonadati</taxon>
        <taxon>Chlorobiota</taxon>
        <taxon>Chlorobiia</taxon>
        <taxon>Chlorobiales</taxon>
        <taxon>Chlorobiaceae</taxon>
        <taxon>Chlorobaculum</taxon>
    </lineage>
</organism>
<gene>
    <name evidence="1" type="primary">bshC</name>
    <name type="ordered locus">CT1558</name>
</gene>
<keyword id="KW-0175">Coiled coil</keyword>
<keyword id="KW-0436">Ligase</keyword>
<keyword id="KW-1185">Reference proteome</keyword>
<reference key="1">
    <citation type="journal article" date="2002" name="Proc. Natl. Acad. Sci. U.S.A.">
        <title>The complete genome sequence of Chlorobium tepidum TLS, a photosynthetic, anaerobic, green-sulfur bacterium.</title>
        <authorList>
            <person name="Eisen J.A."/>
            <person name="Nelson K.E."/>
            <person name="Paulsen I.T."/>
            <person name="Heidelberg J.F."/>
            <person name="Wu M."/>
            <person name="Dodson R.J."/>
            <person name="DeBoy R.T."/>
            <person name="Gwinn M.L."/>
            <person name="Nelson W.C."/>
            <person name="Haft D.H."/>
            <person name="Hickey E.K."/>
            <person name="Peterson J.D."/>
            <person name="Durkin A.S."/>
            <person name="Kolonay J.F."/>
            <person name="Yang F."/>
            <person name="Holt I.E."/>
            <person name="Umayam L.A."/>
            <person name="Mason T.M."/>
            <person name="Brenner M."/>
            <person name="Shea T.P."/>
            <person name="Parksey D.S."/>
            <person name="Nierman W.C."/>
            <person name="Feldblyum T.V."/>
            <person name="Hansen C.L."/>
            <person name="Craven M.B."/>
            <person name="Radune D."/>
            <person name="Vamathevan J.J."/>
            <person name="Khouri H.M."/>
            <person name="White O."/>
            <person name="Gruber T.M."/>
            <person name="Ketchum K.A."/>
            <person name="Venter J.C."/>
            <person name="Tettelin H."/>
            <person name="Bryant D.A."/>
            <person name="Fraser C.M."/>
        </authorList>
    </citation>
    <scope>NUCLEOTIDE SEQUENCE [LARGE SCALE GENOMIC DNA]</scope>
    <source>
        <strain>ATCC 49652 / DSM 12025 / NBRC 103806 / TLS</strain>
    </source>
</reference>
<evidence type="ECO:0000255" key="1">
    <source>
        <dbReference type="HAMAP-Rule" id="MF_01867"/>
    </source>
</evidence>
<dbReference type="EC" id="6.-.-.-" evidence="1"/>
<dbReference type="EMBL" id="AE006470">
    <property type="protein sequence ID" value="AAM72783.1"/>
    <property type="molecule type" value="Genomic_DNA"/>
</dbReference>
<dbReference type="RefSeq" id="NP_662441.1">
    <property type="nucleotide sequence ID" value="NC_002932.3"/>
</dbReference>
<dbReference type="RefSeq" id="WP_010933222.1">
    <property type="nucleotide sequence ID" value="NC_002932.3"/>
</dbReference>
<dbReference type="SMR" id="Q8KC68"/>
<dbReference type="STRING" id="194439.CT1558"/>
<dbReference type="EnsemblBacteria" id="AAM72783">
    <property type="protein sequence ID" value="AAM72783"/>
    <property type="gene ID" value="CT1558"/>
</dbReference>
<dbReference type="KEGG" id="cte:CT1558"/>
<dbReference type="PATRIC" id="fig|194439.7.peg.1411"/>
<dbReference type="eggNOG" id="COG4365">
    <property type="taxonomic scope" value="Bacteria"/>
</dbReference>
<dbReference type="HOGENOM" id="CLU_022249_1_0_10"/>
<dbReference type="OrthoDB" id="9765151at2"/>
<dbReference type="Proteomes" id="UP000001007">
    <property type="component" value="Chromosome"/>
</dbReference>
<dbReference type="GO" id="GO:0016874">
    <property type="term" value="F:ligase activity"/>
    <property type="evidence" value="ECO:0007669"/>
    <property type="project" value="UniProtKB-UniRule"/>
</dbReference>
<dbReference type="HAMAP" id="MF_01867">
    <property type="entry name" value="BshC"/>
    <property type="match status" value="1"/>
</dbReference>
<dbReference type="InterPro" id="IPR011199">
    <property type="entry name" value="Bacillithiol_biosynth_BshC"/>
</dbReference>
<dbReference type="InterPro" id="IPR055399">
    <property type="entry name" value="CC_BshC"/>
</dbReference>
<dbReference type="InterPro" id="IPR055398">
    <property type="entry name" value="Rossmann-like_BshC"/>
</dbReference>
<dbReference type="NCBIfam" id="TIGR03998">
    <property type="entry name" value="thiol_BshC"/>
    <property type="match status" value="1"/>
</dbReference>
<dbReference type="Pfam" id="PF24850">
    <property type="entry name" value="CC_BshC"/>
    <property type="match status" value="1"/>
</dbReference>
<dbReference type="Pfam" id="PF10079">
    <property type="entry name" value="Rossmann-like_BshC"/>
    <property type="match status" value="1"/>
</dbReference>
<dbReference type="PIRSF" id="PIRSF012535">
    <property type="entry name" value="UCP012535"/>
    <property type="match status" value="1"/>
</dbReference>
<comment type="similarity">
    <text evidence="1">Belongs to the BshC family.</text>
</comment>